<comment type="interaction">
    <interactant intactId="EBI-21796846">
        <id>Q5M9N0-2</id>
    </interactant>
    <interactant intactId="EBI-491169">
        <id>P07550</id>
        <label>ADRB2</label>
    </interactant>
    <organismsDiffer>false</organismsDiffer>
    <experiments>3</experiments>
</comment>
<comment type="interaction">
    <interactant intactId="EBI-21796846">
        <id>Q5M9N0-2</id>
    </interactant>
    <interactant intactId="EBI-348399">
        <id>P22607</id>
        <label>FGFR3</label>
    </interactant>
    <organismsDiffer>false</organismsDiffer>
    <experiments>3</experiments>
</comment>
<comment type="interaction">
    <interactant intactId="EBI-21796846">
        <id>Q5M9N0-2</id>
    </interactant>
    <interactant intactId="EBI-8285963">
        <id>Q14957</id>
        <label>GRIN2C</label>
    </interactant>
    <organismsDiffer>false</organismsDiffer>
    <experiments>3</experiments>
</comment>
<comment type="interaction">
    <interactant intactId="EBI-21796846">
        <id>Q5M9N0-2</id>
    </interactant>
    <interactant intactId="EBI-5235340">
        <id>Q7Z699</id>
        <label>SPRED1</label>
    </interactant>
    <organismsDiffer>false</organismsDiffer>
    <experiments>3</experiments>
</comment>
<comment type="interaction">
    <interactant intactId="EBI-21796846">
        <id>Q5M9N0-2</id>
    </interactant>
    <interactant intactId="EBI-12806590">
        <id>Q86WV8</id>
        <label>TSC1</label>
    </interactant>
    <organismsDiffer>false</organismsDiffer>
    <experiments>3</experiments>
</comment>
<comment type="interaction">
    <interactant intactId="EBI-21796846">
        <id>Q5M9N0-2</id>
    </interactant>
    <interactant intactId="EBI-1048893">
        <id>P54577</id>
        <label>YARS1</label>
    </interactant>
    <organismsDiffer>false</organismsDiffer>
    <experiments>3</experiments>
</comment>
<comment type="alternative products">
    <event type="alternative splicing"/>
    <isoform>
        <id>Q5M9N0-1</id>
        <name>1</name>
        <sequence type="displayed"/>
    </isoform>
    <isoform>
        <id>Q5M9N0-2</id>
        <name>2</name>
        <sequence type="described" ref="VSP_032391"/>
    </isoform>
    <isoform>
        <id>Q5M9N0-3</id>
        <name>3</name>
        <sequence type="described" ref="VSP_032390 VSP_032392"/>
    </isoform>
</comment>
<comment type="sequence caution" evidence="5">
    <conflict type="erroneous initiation">
        <sequence resource="EMBL-CDS" id="BAC05347"/>
    </conflict>
</comment>
<comment type="sequence caution" evidence="5">
    <conflict type="erroneous initiation">
        <sequence resource="EMBL-CDS" id="BAC05359"/>
    </conflict>
</comment>
<comment type="sequence caution" evidence="5">
    <conflict type="frameshift">
        <sequence resource="EMBL" id="BC035224"/>
    </conflict>
</comment>
<dbReference type="EMBL" id="AC034139">
    <property type="status" value="NOT_ANNOTATED_CDS"/>
    <property type="molecule type" value="Genomic_DNA"/>
</dbReference>
<dbReference type="EMBL" id="AC096743">
    <property type="status" value="NOT_ANNOTATED_CDS"/>
    <property type="molecule type" value="Genomic_DNA"/>
</dbReference>
<dbReference type="EMBL" id="BC035224">
    <property type="status" value="NOT_ANNOTATED_CDS"/>
    <property type="molecule type" value="mRNA"/>
</dbReference>
<dbReference type="EMBL" id="BC086869">
    <property type="protein sequence ID" value="AAH86869.1"/>
    <property type="molecule type" value="mRNA"/>
</dbReference>
<dbReference type="EMBL" id="AK098600">
    <property type="protein sequence ID" value="BAC05347.1"/>
    <property type="status" value="ALT_INIT"/>
    <property type="molecule type" value="mRNA"/>
</dbReference>
<dbReference type="EMBL" id="AK098636">
    <property type="protein sequence ID" value="BAC05359.1"/>
    <property type="status" value="ALT_INIT"/>
    <property type="molecule type" value="mRNA"/>
</dbReference>
<dbReference type="CCDS" id="CCDS43242.1">
    <molecule id="Q5M9N0-1"/>
</dbReference>
<dbReference type="RefSeq" id="NP_001036249.1">
    <molecule id="Q5M9N0-1"/>
    <property type="nucleotide sequence ID" value="NM_001042784.1"/>
</dbReference>
<dbReference type="RefSeq" id="XP_005263031.1">
    <molecule id="Q5M9N0-1"/>
    <property type="nucleotide sequence ID" value="XM_005262974.5"/>
</dbReference>
<dbReference type="RefSeq" id="XP_054205897.1">
    <molecule id="Q5M9N0-1"/>
    <property type="nucleotide sequence ID" value="XM_054349922.1"/>
</dbReference>
<dbReference type="SMR" id="Q5M9N0"/>
<dbReference type="BioGRID" id="130969">
    <property type="interactions" value="22"/>
</dbReference>
<dbReference type="DIP" id="DIP-47314N"/>
<dbReference type="FunCoup" id="Q5M9N0">
    <property type="interactions" value="27"/>
</dbReference>
<dbReference type="IntAct" id="Q5M9N0">
    <property type="interactions" value="21"/>
</dbReference>
<dbReference type="MINT" id="Q5M9N0"/>
<dbReference type="STRING" id="9606.ENSP00000373566"/>
<dbReference type="GlyCosmos" id="Q5M9N0">
    <property type="glycosylation" value="1 site, 1 glycan"/>
</dbReference>
<dbReference type="GlyGen" id="Q5M9N0">
    <property type="glycosylation" value="1 site, 1 O-linked glycan (1 site)"/>
</dbReference>
<dbReference type="iPTMnet" id="Q5M9N0"/>
<dbReference type="PhosphoSitePlus" id="Q5M9N0"/>
<dbReference type="BioMuta" id="CCDC158"/>
<dbReference type="DMDM" id="172045891"/>
<dbReference type="jPOST" id="Q5M9N0"/>
<dbReference type="MassIVE" id="Q5M9N0"/>
<dbReference type="PaxDb" id="9606-ENSP00000373566"/>
<dbReference type="PeptideAtlas" id="Q5M9N0"/>
<dbReference type="ProteomicsDB" id="63568">
    <molecule id="Q5M9N0-1"/>
</dbReference>
<dbReference type="ProteomicsDB" id="63569">
    <molecule id="Q5M9N0-2"/>
</dbReference>
<dbReference type="ProteomicsDB" id="63570">
    <molecule id="Q5M9N0-3"/>
</dbReference>
<dbReference type="Antibodypedia" id="6349">
    <property type="antibodies" value="72 antibodies from 18 providers"/>
</dbReference>
<dbReference type="DNASU" id="339965"/>
<dbReference type="Ensembl" id="ENST00000388914.7">
    <molecule id="Q5M9N0-1"/>
    <property type="protein sequence ID" value="ENSP00000373566.2"/>
    <property type="gene ID" value="ENSG00000163749.18"/>
</dbReference>
<dbReference type="Ensembl" id="ENST00000434846.2">
    <molecule id="Q5M9N0-3"/>
    <property type="protein sequence ID" value="ENSP00000401742.2"/>
    <property type="gene ID" value="ENSG00000163749.18"/>
</dbReference>
<dbReference type="GeneID" id="339965"/>
<dbReference type="KEGG" id="hsa:339965"/>
<dbReference type="UCSC" id="uc003hkb.5">
    <molecule id="Q5M9N0-1"/>
    <property type="organism name" value="human"/>
</dbReference>
<dbReference type="AGR" id="HGNC:26374"/>
<dbReference type="CTD" id="339965"/>
<dbReference type="DisGeNET" id="339965"/>
<dbReference type="GeneCards" id="CCDC158"/>
<dbReference type="HGNC" id="HGNC:26374">
    <property type="gene designation" value="CCDC158"/>
</dbReference>
<dbReference type="HPA" id="ENSG00000163749">
    <property type="expression patterns" value="Tissue enriched (testis)"/>
</dbReference>
<dbReference type="neXtProt" id="NX_Q5M9N0"/>
<dbReference type="OpenTargets" id="ENSG00000163749"/>
<dbReference type="PharmGKB" id="PA164717707"/>
<dbReference type="VEuPathDB" id="HostDB:ENSG00000163749"/>
<dbReference type="eggNOG" id="KOG1836">
    <property type="taxonomic scope" value="Eukaryota"/>
</dbReference>
<dbReference type="GeneTree" id="ENSGT00390000013339"/>
<dbReference type="HOGENOM" id="CLU_009414_0_0_1"/>
<dbReference type="InParanoid" id="Q5M9N0"/>
<dbReference type="OMA" id="CIIQCQE"/>
<dbReference type="OrthoDB" id="10072099at2759"/>
<dbReference type="PAN-GO" id="Q5M9N0">
    <property type="GO annotations" value="0 GO annotations based on evolutionary models"/>
</dbReference>
<dbReference type="PhylomeDB" id="Q5M9N0"/>
<dbReference type="TreeFam" id="TF337019"/>
<dbReference type="PathwayCommons" id="Q5M9N0"/>
<dbReference type="SignaLink" id="Q5M9N0"/>
<dbReference type="BioGRID-ORCS" id="339965">
    <property type="hits" value="14 hits in 1137 CRISPR screens"/>
</dbReference>
<dbReference type="GenomeRNAi" id="339965"/>
<dbReference type="Pharos" id="Q5M9N0">
    <property type="development level" value="Tdark"/>
</dbReference>
<dbReference type="PRO" id="PR:Q5M9N0"/>
<dbReference type="Proteomes" id="UP000005640">
    <property type="component" value="Chromosome 4"/>
</dbReference>
<dbReference type="RNAct" id="Q5M9N0">
    <property type="molecule type" value="protein"/>
</dbReference>
<dbReference type="Bgee" id="ENSG00000163749">
    <property type="expression patterns" value="Expressed in sperm and 94 other cell types or tissues"/>
</dbReference>
<dbReference type="Gene3D" id="1.10.287.1490">
    <property type="match status" value="1"/>
</dbReference>
<dbReference type="InterPro" id="IPR031809">
    <property type="entry name" value="CCDC158"/>
</dbReference>
<dbReference type="PANTHER" id="PTHR47615">
    <property type="entry name" value="COILED-COIL DOMAIN-CONTAINING PROTEIN 158"/>
    <property type="match status" value="1"/>
</dbReference>
<dbReference type="PANTHER" id="PTHR47615:SF1">
    <property type="entry name" value="COILED-COIL DOMAIN-CONTAINING PROTEIN 158"/>
    <property type="match status" value="1"/>
</dbReference>
<dbReference type="Pfam" id="PF15921">
    <property type="entry name" value="CCDC158"/>
    <property type="match status" value="1"/>
</dbReference>
<name>CD158_HUMAN</name>
<sequence>MESKAWESNNEDLLSSSGVTSNGGSSSSFFVSSIRGTIIENTSSAGTLTQVPFFPKYEVELDSPRKIIPSPGKEHFERVLEEYSHQVKDLQRRLNESNELHEKQKFYLRQSVIDLQTKLQEMQMERDAMADIRRRESQSQEDLRNQLQNTVHELEAAKCLKEDMLKDSNTQIEQLRKMMLSHEGVLQEIRSILVDFEEASGKKICEHDSMSTLHFRSLGSAISKILRELDTEISYLKGRIFPVEDQLEALKSESQNKIELLLQQHQDRIEQLISEHEVEITGLTEKASSARSQANSIQSQMEIIQEQARNQNSMYMRQLSDLESTVSQLRSELREAKRMYEDKTEELEKQLVLANSELTEARTERDQFSQESGNLDDQLQKLLADLHKREKELSLEKEQNKRLWDRDTGNSITIDHLRRELDNRNMEVQRLEALLKALKSECQGQMERQMAAIQGKNESLEKVSSLTAQLESTKEMLRKVVEELTAKKMTLESSERTISDLTTSLQEKERAIEATNAEITKLRSRVDLKLQELQHLKNEGDHLRNVQTECEALKLQMTEKDKVIEILRQQIENMTQLVGQHGRTAGAMQVEKAQLEKEINDRRMELKELKILKDKKDAKIRELEARVSDLELEKVKLVNAGSERLRAVKDIKQERDQLLNEVKTSRSELNNLSEEYEVLKRNFRNKSEEMEMTTNKLKMQLKSAQSELEQTRNTLKSMEGSDGHAMKVAMGMQKQITAKRGQIDALQSKIQFLEEAMTNANKEKHFLKEEKSKLSQELSTVATEKNKMAGELEVLRSQERRLKEKVTNMEVALDKASLQFAECQDIIQRQEQESVRLKLQHTLDIKELQGPGYTSNSSLKPRLLQPASVTRSHSNVPSSQSTASFLSHHSTKANTLKEDPTRDLKQLLQELRSVINEEPAVSLSKTEEDGRTSLGALEDRVRDCITESSLRSDMCHRSNNSLRDSTEGSKSSETLSREPVTLHAGDREDPSGCFTFTSAASPSVKNSASRSFNSSPKKSPVHSLLTSSVEGSIGSTSQYRSAKPIHSSDSVKDSQSPPIETTGKTCRKLQNRLESLQTLVEDLQLKNQAMSSMIRNQEKRIQKVKDQEKMLLK</sequence>
<organism>
    <name type="scientific">Homo sapiens</name>
    <name type="common">Human</name>
    <dbReference type="NCBI Taxonomy" id="9606"/>
    <lineage>
        <taxon>Eukaryota</taxon>
        <taxon>Metazoa</taxon>
        <taxon>Chordata</taxon>
        <taxon>Craniata</taxon>
        <taxon>Vertebrata</taxon>
        <taxon>Euteleostomi</taxon>
        <taxon>Mammalia</taxon>
        <taxon>Eutheria</taxon>
        <taxon>Euarchontoglires</taxon>
        <taxon>Primates</taxon>
        <taxon>Haplorrhini</taxon>
        <taxon>Catarrhini</taxon>
        <taxon>Hominidae</taxon>
        <taxon>Homo</taxon>
    </lineage>
</organism>
<evidence type="ECO:0000255" key="1"/>
<evidence type="ECO:0000256" key="2">
    <source>
        <dbReference type="SAM" id="MobiDB-lite"/>
    </source>
</evidence>
<evidence type="ECO:0000303" key="3">
    <source>
    </source>
</evidence>
<evidence type="ECO:0000303" key="4">
    <source>
    </source>
</evidence>
<evidence type="ECO:0000305" key="5"/>
<protein>
    <recommendedName>
        <fullName>Coiled-coil domain-containing protein 158</fullName>
    </recommendedName>
</protein>
<proteinExistence type="evidence at protein level"/>
<reference key="1">
    <citation type="journal article" date="2005" name="Nature">
        <title>Generation and annotation of the DNA sequences of human chromosomes 2 and 4.</title>
        <authorList>
            <person name="Hillier L.W."/>
            <person name="Graves T.A."/>
            <person name="Fulton R.S."/>
            <person name="Fulton L.A."/>
            <person name="Pepin K.H."/>
            <person name="Minx P."/>
            <person name="Wagner-McPherson C."/>
            <person name="Layman D."/>
            <person name="Wylie K."/>
            <person name="Sekhon M."/>
            <person name="Becker M.C."/>
            <person name="Fewell G.A."/>
            <person name="Delehaunty K.D."/>
            <person name="Miner T.L."/>
            <person name="Nash W.E."/>
            <person name="Kremitzki C."/>
            <person name="Oddy L."/>
            <person name="Du H."/>
            <person name="Sun H."/>
            <person name="Bradshaw-Cordum H."/>
            <person name="Ali J."/>
            <person name="Carter J."/>
            <person name="Cordes M."/>
            <person name="Harris A."/>
            <person name="Isak A."/>
            <person name="van Brunt A."/>
            <person name="Nguyen C."/>
            <person name="Du F."/>
            <person name="Courtney L."/>
            <person name="Kalicki J."/>
            <person name="Ozersky P."/>
            <person name="Abbott S."/>
            <person name="Armstrong J."/>
            <person name="Belter E.A."/>
            <person name="Caruso L."/>
            <person name="Cedroni M."/>
            <person name="Cotton M."/>
            <person name="Davidson T."/>
            <person name="Desai A."/>
            <person name="Elliott G."/>
            <person name="Erb T."/>
            <person name="Fronick C."/>
            <person name="Gaige T."/>
            <person name="Haakenson W."/>
            <person name="Haglund K."/>
            <person name="Holmes A."/>
            <person name="Harkins R."/>
            <person name="Kim K."/>
            <person name="Kruchowski S.S."/>
            <person name="Strong C.M."/>
            <person name="Grewal N."/>
            <person name="Goyea E."/>
            <person name="Hou S."/>
            <person name="Levy A."/>
            <person name="Martinka S."/>
            <person name="Mead K."/>
            <person name="McLellan M.D."/>
            <person name="Meyer R."/>
            <person name="Randall-Maher J."/>
            <person name="Tomlinson C."/>
            <person name="Dauphin-Kohlberg S."/>
            <person name="Kozlowicz-Reilly A."/>
            <person name="Shah N."/>
            <person name="Swearengen-Shahid S."/>
            <person name="Snider J."/>
            <person name="Strong J.T."/>
            <person name="Thompson J."/>
            <person name="Yoakum M."/>
            <person name="Leonard S."/>
            <person name="Pearman C."/>
            <person name="Trani L."/>
            <person name="Radionenko M."/>
            <person name="Waligorski J.E."/>
            <person name="Wang C."/>
            <person name="Rock S.M."/>
            <person name="Tin-Wollam A.-M."/>
            <person name="Maupin R."/>
            <person name="Latreille P."/>
            <person name="Wendl M.C."/>
            <person name="Yang S.-P."/>
            <person name="Pohl C."/>
            <person name="Wallis J.W."/>
            <person name="Spieth J."/>
            <person name="Bieri T.A."/>
            <person name="Berkowicz N."/>
            <person name="Nelson J.O."/>
            <person name="Osborne J."/>
            <person name="Ding L."/>
            <person name="Meyer R."/>
            <person name="Sabo A."/>
            <person name="Shotland Y."/>
            <person name="Sinha P."/>
            <person name="Wohldmann P.E."/>
            <person name="Cook L.L."/>
            <person name="Hickenbotham M.T."/>
            <person name="Eldred J."/>
            <person name="Williams D."/>
            <person name="Jones T.A."/>
            <person name="She X."/>
            <person name="Ciccarelli F.D."/>
            <person name="Izaurralde E."/>
            <person name="Taylor J."/>
            <person name="Schmutz J."/>
            <person name="Myers R.M."/>
            <person name="Cox D.R."/>
            <person name="Huang X."/>
            <person name="McPherson J.D."/>
            <person name="Mardis E.R."/>
            <person name="Clifton S.W."/>
            <person name="Warren W.C."/>
            <person name="Chinwalla A.T."/>
            <person name="Eddy S.R."/>
            <person name="Marra M.A."/>
            <person name="Ovcharenko I."/>
            <person name="Furey T.S."/>
            <person name="Miller W."/>
            <person name="Eichler E.E."/>
            <person name="Bork P."/>
            <person name="Suyama M."/>
            <person name="Torrents D."/>
            <person name="Waterston R.H."/>
            <person name="Wilson R.K."/>
        </authorList>
    </citation>
    <scope>NUCLEOTIDE SEQUENCE [LARGE SCALE GENOMIC DNA]</scope>
</reference>
<reference key="2">
    <citation type="journal article" date="2004" name="Genome Res.">
        <title>The status, quality, and expansion of the NIH full-length cDNA project: the Mammalian Gene Collection (MGC).</title>
        <authorList>
            <consortium name="The MGC Project Team"/>
        </authorList>
    </citation>
    <scope>NUCLEOTIDE SEQUENCE [LARGE SCALE MRNA] (ISOFORM 3)</scope>
    <scope>NUCLEOTIDE SEQUENCE [LARGE SCALE MRNA] OF 160-1113 (ISOFORM 1)</scope>
    <source>
        <tissue>Brain</tissue>
        <tissue>Testis</tissue>
    </source>
</reference>
<reference key="3">
    <citation type="journal article" date="2004" name="Nat. Genet.">
        <title>Complete sequencing and characterization of 21,243 full-length human cDNAs.</title>
        <authorList>
            <person name="Ota T."/>
            <person name="Suzuki Y."/>
            <person name="Nishikawa T."/>
            <person name="Otsuki T."/>
            <person name="Sugiyama T."/>
            <person name="Irie R."/>
            <person name="Wakamatsu A."/>
            <person name="Hayashi K."/>
            <person name="Sato H."/>
            <person name="Nagai K."/>
            <person name="Kimura K."/>
            <person name="Makita H."/>
            <person name="Sekine M."/>
            <person name="Obayashi M."/>
            <person name="Nishi T."/>
            <person name="Shibahara T."/>
            <person name="Tanaka T."/>
            <person name="Ishii S."/>
            <person name="Yamamoto J."/>
            <person name="Saito K."/>
            <person name="Kawai Y."/>
            <person name="Isono Y."/>
            <person name="Nakamura Y."/>
            <person name="Nagahari K."/>
            <person name="Murakami K."/>
            <person name="Yasuda T."/>
            <person name="Iwayanagi T."/>
            <person name="Wagatsuma M."/>
            <person name="Shiratori A."/>
            <person name="Sudo H."/>
            <person name="Hosoiri T."/>
            <person name="Kaku Y."/>
            <person name="Kodaira H."/>
            <person name="Kondo H."/>
            <person name="Sugawara M."/>
            <person name="Takahashi M."/>
            <person name="Kanda K."/>
            <person name="Yokoi T."/>
            <person name="Furuya T."/>
            <person name="Kikkawa E."/>
            <person name="Omura Y."/>
            <person name="Abe K."/>
            <person name="Kamihara K."/>
            <person name="Katsuta N."/>
            <person name="Sato K."/>
            <person name="Tanikawa M."/>
            <person name="Yamazaki M."/>
            <person name="Ninomiya K."/>
            <person name="Ishibashi T."/>
            <person name="Yamashita H."/>
            <person name="Murakawa K."/>
            <person name="Fujimori K."/>
            <person name="Tanai H."/>
            <person name="Kimata M."/>
            <person name="Watanabe M."/>
            <person name="Hiraoka S."/>
            <person name="Chiba Y."/>
            <person name="Ishida S."/>
            <person name="Ono Y."/>
            <person name="Takiguchi S."/>
            <person name="Watanabe S."/>
            <person name="Yosida M."/>
            <person name="Hotuta T."/>
            <person name="Kusano J."/>
            <person name="Kanehori K."/>
            <person name="Takahashi-Fujii A."/>
            <person name="Hara H."/>
            <person name="Tanase T.-O."/>
            <person name="Nomura Y."/>
            <person name="Togiya S."/>
            <person name="Komai F."/>
            <person name="Hara R."/>
            <person name="Takeuchi K."/>
            <person name="Arita M."/>
            <person name="Imose N."/>
            <person name="Musashino K."/>
            <person name="Yuuki H."/>
            <person name="Oshima A."/>
            <person name="Sasaki N."/>
            <person name="Aotsuka S."/>
            <person name="Yoshikawa Y."/>
            <person name="Matsunawa H."/>
            <person name="Ichihara T."/>
            <person name="Shiohata N."/>
            <person name="Sano S."/>
            <person name="Moriya S."/>
            <person name="Momiyama H."/>
            <person name="Satoh N."/>
            <person name="Takami S."/>
            <person name="Terashima Y."/>
            <person name="Suzuki O."/>
            <person name="Nakagawa S."/>
            <person name="Senoh A."/>
            <person name="Mizoguchi H."/>
            <person name="Goto Y."/>
            <person name="Shimizu F."/>
            <person name="Wakebe H."/>
            <person name="Hishigaki H."/>
            <person name="Watanabe T."/>
            <person name="Sugiyama A."/>
            <person name="Takemoto M."/>
            <person name="Kawakami B."/>
            <person name="Yamazaki M."/>
            <person name="Watanabe K."/>
            <person name="Kumagai A."/>
            <person name="Itakura S."/>
            <person name="Fukuzumi Y."/>
            <person name="Fujimori Y."/>
            <person name="Komiyama M."/>
            <person name="Tashiro H."/>
            <person name="Tanigami A."/>
            <person name="Fujiwara T."/>
            <person name="Ono T."/>
            <person name="Yamada K."/>
            <person name="Fujii Y."/>
            <person name="Ozaki K."/>
            <person name="Hirao M."/>
            <person name="Ohmori Y."/>
            <person name="Kawabata A."/>
            <person name="Hikiji T."/>
            <person name="Kobatake N."/>
            <person name="Inagaki H."/>
            <person name="Ikema Y."/>
            <person name="Okamoto S."/>
            <person name="Okitani R."/>
            <person name="Kawakami T."/>
            <person name="Noguchi S."/>
            <person name="Itoh T."/>
            <person name="Shigeta K."/>
            <person name="Senba T."/>
            <person name="Matsumura K."/>
            <person name="Nakajima Y."/>
            <person name="Mizuno T."/>
            <person name="Morinaga M."/>
            <person name="Sasaki M."/>
            <person name="Togashi T."/>
            <person name="Oyama M."/>
            <person name="Hata H."/>
            <person name="Watanabe M."/>
            <person name="Komatsu T."/>
            <person name="Mizushima-Sugano J."/>
            <person name="Satoh T."/>
            <person name="Shirai Y."/>
            <person name="Takahashi Y."/>
            <person name="Nakagawa K."/>
            <person name="Okumura K."/>
            <person name="Nagase T."/>
            <person name="Nomura N."/>
            <person name="Kikuchi H."/>
            <person name="Masuho Y."/>
            <person name="Yamashita R."/>
            <person name="Nakai K."/>
            <person name="Yada T."/>
            <person name="Nakamura Y."/>
            <person name="Ohara O."/>
            <person name="Isogai T."/>
            <person name="Sugano S."/>
        </authorList>
    </citation>
    <scope>NUCLEOTIDE SEQUENCE [LARGE SCALE MRNA] OF 15-1113 (ISOFORM 2)</scope>
    <scope>NUCLEOTIDE SEQUENCE [LARGE SCALE MRNA] OF 611-1113 (ISOFORM 1)</scope>
    <source>
        <tissue>Testis</tissue>
    </source>
</reference>
<accession>Q5M9N0</accession>
<accession>Q8IYQ1</accession>
<accession>Q8N7D4</accession>
<accession>Q8N7E3</accession>
<feature type="chain" id="PRO_0000325760" description="Coiled-coil domain-containing protein 158">
    <location>
        <begin position="1"/>
        <end position="1113"/>
    </location>
</feature>
<feature type="region of interest" description="Disordered" evidence="2">
    <location>
        <begin position="1"/>
        <end position="26"/>
    </location>
</feature>
<feature type="region of interest" description="Disordered" evidence="2">
    <location>
        <begin position="848"/>
        <end position="902"/>
    </location>
</feature>
<feature type="region of interest" description="Disordered" evidence="2">
    <location>
        <begin position="955"/>
        <end position="1062"/>
    </location>
</feature>
<feature type="coiled-coil region" evidence="1">
    <location>
        <begin position="72"/>
        <end position="183"/>
    </location>
</feature>
<feature type="coiled-coil region" evidence="1">
    <location>
        <begin position="243"/>
        <end position="833"/>
    </location>
</feature>
<feature type="coiled-coil region" evidence="1">
    <location>
        <begin position="1061"/>
        <end position="1113"/>
    </location>
</feature>
<feature type="compositionally biased region" description="Polar residues" evidence="2">
    <location>
        <begin position="1"/>
        <end position="14"/>
    </location>
</feature>
<feature type="compositionally biased region" description="Low complexity" evidence="2">
    <location>
        <begin position="15"/>
        <end position="26"/>
    </location>
</feature>
<feature type="compositionally biased region" description="Polar residues" evidence="2">
    <location>
        <begin position="867"/>
        <end position="894"/>
    </location>
</feature>
<feature type="compositionally biased region" description="Polar residues" evidence="2">
    <location>
        <begin position="955"/>
        <end position="974"/>
    </location>
</feature>
<feature type="compositionally biased region" description="Polar residues" evidence="2">
    <location>
        <begin position="994"/>
        <end position="1017"/>
    </location>
</feature>
<feature type="compositionally biased region" description="Polar residues" evidence="2">
    <location>
        <begin position="1024"/>
        <end position="1040"/>
    </location>
</feature>
<feature type="compositionally biased region" description="Polar residues" evidence="2">
    <location>
        <begin position="1053"/>
        <end position="1062"/>
    </location>
</feature>
<feature type="splice variant" id="VSP_032390" description="In isoform 3." evidence="4">
    <original>TEELEKQLVLANSELTEARTERDQFSQESGNLDDQLQKLLADLHKREKELSLEKEQNKRLWDR</original>
    <variation>ENLQNSPLRIWTSRSCHYWLCRFGFTLNFRFLTTKISPDVDSAFIFTTLKAVGAEFCIKKVMI</variation>
    <location>
        <begin position="344"/>
        <end position="406"/>
    </location>
</feature>
<feature type="splice variant" id="VSP_032391" description="In isoform 2." evidence="3">
    <location>
        <begin position="368"/>
        <end position="947"/>
    </location>
</feature>
<feature type="splice variant" id="VSP_032392" description="In isoform 3." evidence="4">
    <location>
        <begin position="407"/>
        <end position="1113"/>
    </location>
</feature>
<feature type="sequence variant" id="VAR_039909" description="In dbSNP:rs17001889.">
    <original>E</original>
    <variation>D</variation>
    <location>
        <position position="232"/>
    </location>
</feature>
<feature type="sequence variant" id="VAR_039910" description="In dbSNP:rs17001885.">
    <original>I</original>
    <variation>V</variation>
    <location>
        <position position="297"/>
    </location>
</feature>
<keyword id="KW-0025">Alternative splicing</keyword>
<keyword id="KW-0175">Coiled coil</keyword>
<keyword id="KW-1267">Proteomics identification</keyword>
<keyword id="KW-1185">Reference proteome</keyword>
<gene>
    <name type="primary">CCDC158</name>
</gene>